<dbReference type="EC" id="2.5.1.75" evidence="1"/>
<dbReference type="EMBL" id="CP000283">
    <property type="protein sequence ID" value="ABE39332.1"/>
    <property type="molecule type" value="Genomic_DNA"/>
</dbReference>
<dbReference type="SMR" id="Q139A7"/>
<dbReference type="STRING" id="316057.RPD_2097"/>
<dbReference type="KEGG" id="rpd:RPD_2097"/>
<dbReference type="eggNOG" id="COG0324">
    <property type="taxonomic scope" value="Bacteria"/>
</dbReference>
<dbReference type="HOGENOM" id="CLU_032616_0_1_5"/>
<dbReference type="Proteomes" id="UP000001818">
    <property type="component" value="Chromosome"/>
</dbReference>
<dbReference type="GO" id="GO:0005524">
    <property type="term" value="F:ATP binding"/>
    <property type="evidence" value="ECO:0007669"/>
    <property type="project" value="UniProtKB-UniRule"/>
</dbReference>
<dbReference type="GO" id="GO:0052381">
    <property type="term" value="F:tRNA dimethylallyltransferase activity"/>
    <property type="evidence" value="ECO:0007669"/>
    <property type="project" value="UniProtKB-UniRule"/>
</dbReference>
<dbReference type="GO" id="GO:0006400">
    <property type="term" value="P:tRNA modification"/>
    <property type="evidence" value="ECO:0007669"/>
    <property type="project" value="TreeGrafter"/>
</dbReference>
<dbReference type="Gene3D" id="1.10.20.140">
    <property type="match status" value="1"/>
</dbReference>
<dbReference type="Gene3D" id="3.40.50.300">
    <property type="entry name" value="P-loop containing nucleotide triphosphate hydrolases"/>
    <property type="match status" value="1"/>
</dbReference>
<dbReference type="HAMAP" id="MF_00185">
    <property type="entry name" value="IPP_trans"/>
    <property type="match status" value="1"/>
</dbReference>
<dbReference type="InterPro" id="IPR039657">
    <property type="entry name" value="Dimethylallyltransferase"/>
</dbReference>
<dbReference type="InterPro" id="IPR018022">
    <property type="entry name" value="IPT"/>
</dbReference>
<dbReference type="InterPro" id="IPR027417">
    <property type="entry name" value="P-loop_NTPase"/>
</dbReference>
<dbReference type="NCBIfam" id="TIGR00174">
    <property type="entry name" value="miaA"/>
    <property type="match status" value="1"/>
</dbReference>
<dbReference type="PANTHER" id="PTHR11088">
    <property type="entry name" value="TRNA DIMETHYLALLYLTRANSFERASE"/>
    <property type="match status" value="1"/>
</dbReference>
<dbReference type="PANTHER" id="PTHR11088:SF60">
    <property type="entry name" value="TRNA DIMETHYLALLYLTRANSFERASE"/>
    <property type="match status" value="1"/>
</dbReference>
<dbReference type="Pfam" id="PF01715">
    <property type="entry name" value="IPPT"/>
    <property type="match status" value="1"/>
</dbReference>
<dbReference type="SUPFAM" id="SSF52540">
    <property type="entry name" value="P-loop containing nucleoside triphosphate hydrolases"/>
    <property type="match status" value="2"/>
</dbReference>
<proteinExistence type="inferred from homology"/>
<keyword id="KW-0067">ATP-binding</keyword>
<keyword id="KW-0460">Magnesium</keyword>
<keyword id="KW-0547">Nucleotide-binding</keyword>
<keyword id="KW-0808">Transferase</keyword>
<keyword id="KW-0819">tRNA processing</keyword>
<sequence length="323" mass="34312">MFGLQMSVATSDMNGSDPGQPGQRPAAVLIAGPTASGKSALALRLAQARDGVVINTDSMQMYRDLRIITARPTAEEEALAAHRLYGSVDAAVNFSAGAYVEAAAGALAEARAAGRLPIFVGGTGLYFKALTRGLSAVPPVAAEVRDAVRLRLDRDGVLALHAELARHDPAGAARLAPADRSRIARALEVVLATGRPLADWHNQASPPLLPPEGFVAMFLAPEREALYGRIDARFAAMLQAGALEEVAALAARNLDPLLPAMKAHGVPALIRHFRGELSLEEAAAIGAADTRHYAKRQFTWFRHQLPEFRWVTPEQAESGLLGT</sequence>
<reference key="1">
    <citation type="submission" date="2006-03" db="EMBL/GenBank/DDBJ databases">
        <title>Complete sequence of Rhodopseudomonas palustris BisB5.</title>
        <authorList>
            <consortium name="US DOE Joint Genome Institute"/>
            <person name="Copeland A."/>
            <person name="Lucas S."/>
            <person name="Lapidus A."/>
            <person name="Barry K."/>
            <person name="Detter J.C."/>
            <person name="Glavina del Rio T."/>
            <person name="Hammon N."/>
            <person name="Israni S."/>
            <person name="Dalin E."/>
            <person name="Tice H."/>
            <person name="Pitluck S."/>
            <person name="Chain P."/>
            <person name="Malfatti S."/>
            <person name="Shin M."/>
            <person name="Vergez L."/>
            <person name="Schmutz J."/>
            <person name="Larimer F."/>
            <person name="Land M."/>
            <person name="Hauser L."/>
            <person name="Pelletier D.A."/>
            <person name="Kyrpides N."/>
            <person name="Lykidis A."/>
            <person name="Oda Y."/>
            <person name="Harwood C.S."/>
            <person name="Richardson P."/>
        </authorList>
    </citation>
    <scope>NUCLEOTIDE SEQUENCE [LARGE SCALE GENOMIC DNA]</scope>
    <source>
        <strain>BisB5</strain>
    </source>
</reference>
<name>MIAA_RHOPS</name>
<evidence type="ECO:0000255" key="1">
    <source>
        <dbReference type="HAMAP-Rule" id="MF_00185"/>
    </source>
</evidence>
<accession>Q139A7</accession>
<feature type="chain" id="PRO_0000377290" description="tRNA dimethylallyltransferase">
    <location>
        <begin position="1"/>
        <end position="323"/>
    </location>
</feature>
<feature type="region of interest" description="Interaction with substrate tRNA" evidence="1">
    <location>
        <begin position="57"/>
        <end position="60"/>
    </location>
</feature>
<feature type="binding site" evidence="1">
    <location>
        <begin position="32"/>
        <end position="39"/>
    </location>
    <ligand>
        <name>ATP</name>
        <dbReference type="ChEBI" id="CHEBI:30616"/>
    </ligand>
</feature>
<feature type="binding site" evidence="1">
    <location>
        <begin position="34"/>
        <end position="39"/>
    </location>
    <ligand>
        <name>substrate</name>
    </ligand>
</feature>
<feature type="site" description="Interaction with substrate tRNA" evidence="1">
    <location>
        <position position="123"/>
    </location>
</feature>
<feature type="site" description="Interaction with substrate tRNA" evidence="1">
    <location>
        <position position="145"/>
    </location>
</feature>
<protein>
    <recommendedName>
        <fullName evidence="1">tRNA dimethylallyltransferase</fullName>
        <ecNumber evidence="1">2.5.1.75</ecNumber>
    </recommendedName>
    <alternativeName>
        <fullName evidence="1">Dimethylallyl diphosphate:tRNA dimethylallyltransferase</fullName>
        <shortName evidence="1">DMAPP:tRNA dimethylallyltransferase</shortName>
        <shortName evidence="1">DMATase</shortName>
    </alternativeName>
    <alternativeName>
        <fullName evidence="1">Isopentenyl-diphosphate:tRNA isopentenyltransferase</fullName>
        <shortName evidence="1">IPP transferase</shortName>
        <shortName evidence="1">IPPT</shortName>
        <shortName evidence="1">IPTase</shortName>
    </alternativeName>
</protein>
<comment type="function">
    <text evidence="1">Catalyzes the transfer of a dimethylallyl group onto the adenine at position 37 in tRNAs that read codons beginning with uridine, leading to the formation of N6-(dimethylallyl)adenosine (i(6)A).</text>
</comment>
<comment type="catalytic activity">
    <reaction evidence="1">
        <text>adenosine(37) in tRNA + dimethylallyl diphosphate = N(6)-dimethylallyladenosine(37) in tRNA + diphosphate</text>
        <dbReference type="Rhea" id="RHEA:26482"/>
        <dbReference type="Rhea" id="RHEA-COMP:10162"/>
        <dbReference type="Rhea" id="RHEA-COMP:10375"/>
        <dbReference type="ChEBI" id="CHEBI:33019"/>
        <dbReference type="ChEBI" id="CHEBI:57623"/>
        <dbReference type="ChEBI" id="CHEBI:74411"/>
        <dbReference type="ChEBI" id="CHEBI:74415"/>
        <dbReference type="EC" id="2.5.1.75"/>
    </reaction>
</comment>
<comment type="cofactor">
    <cofactor evidence="1">
        <name>Mg(2+)</name>
        <dbReference type="ChEBI" id="CHEBI:18420"/>
    </cofactor>
</comment>
<comment type="subunit">
    <text evidence="1">Monomer.</text>
</comment>
<comment type="similarity">
    <text evidence="1">Belongs to the IPP transferase family.</text>
</comment>
<organism>
    <name type="scientific">Rhodopseudomonas palustris (strain BisB5)</name>
    <dbReference type="NCBI Taxonomy" id="316057"/>
    <lineage>
        <taxon>Bacteria</taxon>
        <taxon>Pseudomonadati</taxon>
        <taxon>Pseudomonadota</taxon>
        <taxon>Alphaproteobacteria</taxon>
        <taxon>Hyphomicrobiales</taxon>
        <taxon>Nitrobacteraceae</taxon>
        <taxon>Rhodopseudomonas</taxon>
    </lineage>
</organism>
<gene>
    <name evidence="1" type="primary">miaA</name>
    <name type="ordered locus">RPD_2097</name>
</gene>